<dbReference type="EC" id="2.7.7.38" evidence="1"/>
<dbReference type="EMBL" id="CP001001">
    <property type="protein sequence ID" value="ACB25625.1"/>
    <property type="molecule type" value="Genomic_DNA"/>
</dbReference>
<dbReference type="RefSeq" id="WP_012320585.1">
    <property type="nucleotide sequence ID" value="NC_010505.1"/>
</dbReference>
<dbReference type="SMR" id="B1LVX5"/>
<dbReference type="STRING" id="426355.Mrad2831_3649"/>
<dbReference type="GeneID" id="6139702"/>
<dbReference type="KEGG" id="mrd:Mrad2831_3649"/>
<dbReference type="eggNOG" id="COG1212">
    <property type="taxonomic scope" value="Bacteria"/>
</dbReference>
<dbReference type="HOGENOM" id="CLU_065038_0_1_5"/>
<dbReference type="OrthoDB" id="9815559at2"/>
<dbReference type="UniPathway" id="UPA00030"/>
<dbReference type="UniPathway" id="UPA00358">
    <property type="reaction ID" value="UER00476"/>
</dbReference>
<dbReference type="Proteomes" id="UP000006589">
    <property type="component" value="Chromosome"/>
</dbReference>
<dbReference type="GO" id="GO:0005829">
    <property type="term" value="C:cytosol"/>
    <property type="evidence" value="ECO:0007669"/>
    <property type="project" value="TreeGrafter"/>
</dbReference>
<dbReference type="GO" id="GO:0008690">
    <property type="term" value="F:3-deoxy-manno-octulosonate cytidylyltransferase activity"/>
    <property type="evidence" value="ECO:0007669"/>
    <property type="project" value="UniProtKB-UniRule"/>
</dbReference>
<dbReference type="GO" id="GO:0033468">
    <property type="term" value="P:CMP-keto-3-deoxy-D-manno-octulosonic acid biosynthetic process"/>
    <property type="evidence" value="ECO:0007669"/>
    <property type="project" value="UniProtKB-UniRule"/>
</dbReference>
<dbReference type="GO" id="GO:0009103">
    <property type="term" value="P:lipopolysaccharide biosynthetic process"/>
    <property type="evidence" value="ECO:0007669"/>
    <property type="project" value="UniProtKB-UniRule"/>
</dbReference>
<dbReference type="CDD" id="cd02517">
    <property type="entry name" value="CMP-KDO-Synthetase"/>
    <property type="match status" value="1"/>
</dbReference>
<dbReference type="Gene3D" id="3.90.550.10">
    <property type="entry name" value="Spore Coat Polysaccharide Biosynthesis Protein SpsA, Chain A"/>
    <property type="match status" value="1"/>
</dbReference>
<dbReference type="HAMAP" id="MF_00057">
    <property type="entry name" value="KdsB"/>
    <property type="match status" value="1"/>
</dbReference>
<dbReference type="InterPro" id="IPR003329">
    <property type="entry name" value="Cytidylyl_trans"/>
</dbReference>
<dbReference type="InterPro" id="IPR004528">
    <property type="entry name" value="KdsB"/>
</dbReference>
<dbReference type="InterPro" id="IPR029044">
    <property type="entry name" value="Nucleotide-diphossugar_trans"/>
</dbReference>
<dbReference type="NCBIfam" id="TIGR00466">
    <property type="entry name" value="kdsB"/>
    <property type="match status" value="1"/>
</dbReference>
<dbReference type="NCBIfam" id="NF003948">
    <property type="entry name" value="PRK05450.1-1"/>
    <property type="match status" value="1"/>
</dbReference>
<dbReference type="NCBIfam" id="NF003952">
    <property type="entry name" value="PRK05450.1-5"/>
    <property type="match status" value="1"/>
</dbReference>
<dbReference type="PANTHER" id="PTHR42866">
    <property type="entry name" value="3-DEOXY-MANNO-OCTULOSONATE CYTIDYLYLTRANSFERASE"/>
    <property type="match status" value="1"/>
</dbReference>
<dbReference type="PANTHER" id="PTHR42866:SF2">
    <property type="entry name" value="3-DEOXY-MANNO-OCTULOSONATE CYTIDYLYLTRANSFERASE, MITOCHONDRIAL"/>
    <property type="match status" value="1"/>
</dbReference>
<dbReference type="Pfam" id="PF02348">
    <property type="entry name" value="CTP_transf_3"/>
    <property type="match status" value="1"/>
</dbReference>
<dbReference type="SUPFAM" id="SSF53448">
    <property type="entry name" value="Nucleotide-diphospho-sugar transferases"/>
    <property type="match status" value="1"/>
</dbReference>
<protein>
    <recommendedName>
        <fullName evidence="1">3-deoxy-manno-octulosonate cytidylyltransferase</fullName>
        <ecNumber evidence="1">2.7.7.38</ecNumber>
    </recommendedName>
    <alternativeName>
        <fullName evidence="1">CMP-2-keto-3-deoxyoctulosonic acid synthase</fullName>
        <shortName evidence="1">CKS</shortName>
        <shortName evidence="1">CMP-KDO synthase</shortName>
    </alternativeName>
</protein>
<comment type="function">
    <text evidence="1">Activates KDO (a required 8-carbon sugar) for incorporation into bacterial lipopolysaccharide in Gram-negative bacteria.</text>
</comment>
<comment type="catalytic activity">
    <reaction evidence="1">
        <text>3-deoxy-alpha-D-manno-oct-2-ulosonate + CTP = CMP-3-deoxy-beta-D-manno-octulosonate + diphosphate</text>
        <dbReference type="Rhea" id="RHEA:23448"/>
        <dbReference type="ChEBI" id="CHEBI:33019"/>
        <dbReference type="ChEBI" id="CHEBI:37563"/>
        <dbReference type="ChEBI" id="CHEBI:85986"/>
        <dbReference type="ChEBI" id="CHEBI:85987"/>
        <dbReference type="EC" id="2.7.7.38"/>
    </reaction>
</comment>
<comment type="pathway">
    <text evidence="1">Nucleotide-sugar biosynthesis; CMP-3-deoxy-D-manno-octulosonate biosynthesis; CMP-3-deoxy-D-manno-octulosonate from 3-deoxy-D-manno-octulosonate and CTP: step 1/1.</text>
</comment>
<comment type="pathway">
    <text evidence="1">Bacterial outer membrane biogenesis; lipopolysaccharide biosynthesis.</text>
</comment>
<comment type="subcellular location">
    <subcellularLocation>
        <location evidence="1">Cytoplasm</location>
    </subcellularLocation>
</comment>
<comment type="similarity">
    <text evidence="1">Belongs to the KdsB family.</text>
</comment>
<gene>
    <name evidence="1" type="primary">kdsB</name>
    <name type="ordered locus">Mrad2831_3649</name>
</gene>
<keyword id="KW-0963">Cytoplasm</keyword>
<keyword id="KW-0448">Lipopolysaccharide biosynthesis</keyword>
<keyword id="KW-0548">Nucleotidyltransferase</keyword>
<keyword id="KW-0808">Transferase</keyword>
<sequence>MSDPLVLIPARLAATRLPNKPLADIAGEAMIVHVWRRAVEAGIGPVVVATDTAEIARTVEAAGGLAVMTRADHPSGSDRLAEALEIVDPEGRHDVVVNVQGDLPTIDPAIIGAAIVPLADRTVDIVTLCAPITDPHEADNPNVVKLVGHAVGPGRLRALYFTRARAPWGDGPLWHHIGLYAYRRTALSRFVALPPGELEVREKLEQLRALEAGMRIDAAIVDDLPLGVDTPADLERARALLQGRRLN</sequence>
<organism>
    <name type="scientific">Methylobacterium radiotolerans (strain ATCC 27329 / DSM 1819 / JCM 2831 / NBRC 15690 / NCIMB 10815 / 0-1)</name>
    <dbReference type="NCBI Taxonomy" id="426355"/>
    <lineage>
        <taxon>Bacteria</taxon>
        <taxon>Pseudomonadati</taxon>
        <taxon>Pseudomonadota</taxon>
        <taxon>Alphaproteobacteria</taxon>
        <taxon>Hyphomicrobiales</taxon>
        <taxon>Methylobacteriaceae</taxon>
        <taxon>Methylobacterium</taxon>
    </lineage>
</organism>
<proteinExistence type="inferred from homology"/>
<evidence type="ECO:0000255" key="1">
    <source>
        <dbReference type="HAMAP-Rule" id="MF_00057"/>
    </source>
</evidence>
<name>KDSB_METRJ</name>
<accession>B1LVX5</accession>
<feature type="chain" id="PRO_0000370098" description="3-deoxy-manno-octulosonate cytidylyltransferase">
    <location>
        <begin position="1"/>
        <end position="247"/>
    </location>
</feature>
<reference key="1">
    <citation type="submission" date="2008-03" db="EMBL/GenBank/DDBJ databases">
        <title>Complete sequence of chromosome of Methylobacterium radiotolerans JCM 2831.</title>
        <authorList>
            <consortium name="US DOE Joint Genome Institute"/>
            <person name="Copeland A."/>
            <person name="Lucas S."/>
            <person name="Lapidus A."/>
            <person name="Glavina del Rio T."/>
            <person name="Dalin E."/>
            <person name="Tice H."/>
            <person name="Bruce D."/>
            <person name="Goodwin L."/>
            <person name="Pitluck S."/>
            <person name="Kiss H."/>
            <person name="Brettin T."/>
            <person name="Detter J.C."/>
            <person name="Han C."/>
            <person name="Kuske C.R."/>
            <person name="Schmutz J."/>
            <person name="Larimer F."/>
            <person name="Land M."/>
            <person name="Hauser L."/>
            <person name="Kyrpides N."/>
            <person name="Mikhailova N."/>
            <person name="Marx C.J."/>
            <person name="Richardson P."/>
        </authorList>
    </citation>
    <scope>NUCLEOTIDE SEQUENCE [LARGE SCALE GENOMIC DNA]</scope>
    <source>
        <strain>ATCC 27329 / DSM 1819 / JCM 2831 / NBRC 15690 / NCIMB 10815 / 0-1</strain>
    </source>
</reference>